<gene>
    <name type="primary">Ntsr1</name>
    <name type="synonym">Ntsr</name>
</gene>
<name>NTR1_RAT</name>
<evidence type="ECO:0000250" key="1">
    <source>
        <dbReference type="UniProtKB" id="P30989"/>
    </source>
</evidence>
<evidence type="ECO:0000255" key="2"/>
<evidence type="ECO:0000255" key="3">
    <source>
        <dbReference type="PROSITE-ProRule" id="PRU00521"/>
    </source>
</evidence>
<evidence type="ECO:0000256" key="4">
    <source>
        <dbReference type="SAM" id="MobiDB-lite"/>
    </source>
</evidence>
<evidence type="ECO:0000269" key="5">
    <source>
    </source>
</evidence>
<evidence type="ECO:0000269" key="6">
    <source>
    </source>
</evidence>
<evidence type="ECO:0000269" key="7">
    <source>
    </source>
</evidence>
<evidence type="ECO:0000269" key="8">
    <source>
    </source>
</evidence>
<evidence type="ECO:0007744" key="9">
    <source>
        <dbReference type="PDB" id="4XEE"/>
    </source>
</evidence>
<evidence type="ECO:0007744" key="10">
    <source>
        <dbReference type="PDB" id="4XES"/>
    </source>
</evidence>
<evidence type="ECO:0007829" key="11">
    <source>
        <dbReference type="PDB" id="4XES"/>
    </source>
</evidence>
<evidence type="ECO:0007829" key="12">
    <source>
        <dbReference type="PDB" id="8FMZ"/>
    </source>
</evidence>
<reference key="1">
    <citation type="journal article" date="1990" name="Neuron">
        <title>Structure and functional expression of the cloned rat neurotensin receptor.</title>
        <authorList>
            <person name="Tanaka K."/>
            <person name="Masu M."/>
            <person name="Nakanishi S."/>
        </authorList>
    </citation>
    <scope>NUCLEOTIDE SEQUENCE</scope>
    <scope>FUNCTION</scope>
    <scope>SUBCELLULAR LOCATION</scope>
    <scope>TISSUE SPECIFICITY</scope>
    <source>
        <tissue>Brain</tissue>
    </source>
</reference>
<reference key="2">
    <citation type="journal article" date="2012" name="Nature">
        <title>Structure of the agonist-bound neurotensin receptor.</title>
        <authorList>
            <person name="White J.F."/>
            <person name="Noinaj N."/>
            <person name="Shibata Y."/>
            <person name="Love J."/>
            <person name="Kloss B."/>
            <person name="Xu F."/>
            <person name="Gvozdenovic-Jeremic J."/>
            <person name="Shah P."/>
            <person name="Shiloach J."/>
            <person name="Tate C.G."/>
            <person name="Grisshammer R."/>
        </authorList>
    </citation>
    <scope>X-RAY CRYSTALLOGRAPHY (2.8 ANGSTROMS) OF 43-396 IN COMPLEX WITH NEUROTENSIN FRAGMENT</scope>
    <scope>LIGAND BINDING DOMAIN</scope>
    <scope>DISULFIDE BOND</scope>
</reference>
<reference key="3">
    <citation type="journal article" date="2014" name="Proc. Natl. Acad. Sci. U.S.A.">
        <title>Structure of signaling-competent neurotensin receptor 1 obtained by directed evolution in Escherichia coli.</title>
        <authorList>
            <person name="Egloff P."/>
            <person name="Hillenbrand M."/>
            <person name="Klenk C."/>
            <person name="Batyuk A."/>
            <person name="Heine P."/>
            <person name="Balada S."/>
            <person name="Schlinkmann K.M."/>
            <person name="Scott D.J."/>
            <person name="Schutz M."/>
            <person name="Pluckthun A."/>
        </authorList>
    </citation>
    <scope>X-RAY CRYSTALLOGRAPHY (2.75 ANGSTROMS) OF 50-390 IN COMPLEX WITH NEUROTENSIN FRAGMENT</scope>
    <scope>DISULFIDE BOND</scope>
    <scope>SUBCELLULAR LOCATION</scope>
    <scope>TOPOLOGY</scope>
    <scope>FUNCTION</scope>
</reference>
<reference evidence="9 10" key="4">
    <citation type="journal article" date="2015" name="Nat. Commun.">
        <title>Structural prerequisites for G-protein activation by the neurotensin receptor.</title>
        <authorList>
            <person name="Krumm B.E."/>
            <person name="White J.F."/>
            <person name="Shah P."/>
            <person name="Grisshammer R."/>
        </authorList>
    </citation>
    <scope>X-RAY CRYSTALLOGRAPHY (2.60 ANGSTROMS) OF 43-396</scope>
    <scope>FUNCTION</scope>
    <scope>SUBCELLULAR LOCATION</scope>
    <scope>TOPOLOGY</scope>
    <scope>DISULFIDE BONDS</scope>
    <scope>DOMAIN</scope>
    <scope>MUTAGENESIS OF GLU-166; LEU-310 AND PHE-358</scope>
</reference>
<proteinExistence type="evidence at protein level"/>
<feature type="chain" id="PRO_0000069948" description="Neurotensin receptor type 1">
    <location>
        <begin position="1"/>
        <end position="424"/>
    </location>
</feature>
<feature type="topological domain" description="Extracellular" evidence="7">
    <location>
        <begin position="1"/>
        <end position="68"/>
    </location>
</feature>
<feature type="transmembrane region" description="Helical; Name=1">
    <location>
        <begin position="69"/>
        <end position="89"/>
    </location>
</feature>
<feature type="topological domain" description="Cytoplasmic" evidence="7">
    <location>
        <begin position="90"/>
        <end position="103"/>
    </location>
</feature>
<feature type="transmembrane region" description="Helical; Name=2">
    <location>
        <begin position="104"/>
        <end position="123"/>
    </location>
</feature>
<feature type="topological domain" description="Extracellular" evidence="7">
    <location>
        <begin position="124"/>
        <end position="143"/>
    </location>
</feature>
<feature type="transmembrane region" description="Helical; Name=3">
    <location>
        <begin position="144"/>
        <end position="165"/>
    </location>
</feature>
<feature type="topological domain" description="Cytoplasmic" evidence="7">
    <location>
        <begin position="166"/>
        <end position="185"/>
    </location>
</feature>
<feature type="transmembrane region" description="Helical; Name=4">
    <location>
        <begin position="186"/>
        <end position="206"/>
    </location>
</feature>
<feature type="topological domain" description="Extracellular" evidence="7">
    <location>
        <begin position="207"/>
        <end position="235"/>
    </location>
</feature>
<feature type="transmembrane region" description="Helical; Name=5">
    <location>
        <begin position="236"/>
        <end position="260"/>
    </location>
</feature>
<feature type="topological domain" description="Cytoplasmic" evidence="7">
    <location>
        <begin position="261"/>
        <end position="308"/>
    </location>
</feature>
<feature type="transmembrane region" description="Helical; Name=6">
    <location>
        <begin position="309"/>
        <end position="330"/>
    </location>
</feature>
<feature type="topological domain" description="Extracellular" evidence="7">
    <location>
        <begin position="331"/>
        <end position="348"/>
    </location>
</feature>
<feature type="transmembrane region" description="Helical; Name=7">
    <location>
        <begin position="349"/>
        <end position="369"/>
    </location>
</feature>
<feature type="topological domain" description="Cytoplasmic" evidence="7">
    <location>
        <begin position="370"/>
        <end position="424"/>
    </location>
</feature>
<feature type="region of interest" description="Disordered" evidence="4">
    <location>
        <begin position="1"/>
        <end position="23"/>
    </location>
</feature>
<feature type="region of interest" description="Neurotensin binding">
    <location>
        <begin position="326"/>
        <end position="349"/>
    </location>
</feature>
<feature type="region of interest" description="Disordered" evidence="4">
    <location>
        <begin position="397"/>
        <end position="424"/>
    </location>
</feature>
<feature type="compositionally biased region" description="Polar residues" evidence="4">
    <location>
        <begin position="403"/>
        <end position="424"/>
    </location>
</feature>
<feature type="lipid moiety-binding region" description="S-palmitoyl cysteine" evidence="1">
    <location>
        <position position="386"/>
    </location>
</feature>
<feature type="lipid moiety-binding region" description="S-palmitoyl cysteine" evidence="1">
    <location>
        <position position="388"/>
    </location>
</feature>
<feature type="glycosylation site" description="N-linked (GlcNAc...) asparagine" evidence="2">
    <location>
        <position position="4"/>
    </location>
</feature>
<feature type="glycosylation site" description="N-linked (GlcNAc...) asparagine" evidence="2">
    <location>
        <position position="38"/>
    </location>
</feature>
<feature type="glycosylation site" description="N-linked (GlcNAc...) asparagine" evidence="2">
    <location>
        <position position="42"/>
    </location>
</feature>
<feature type="disulfide bond" evidence="3 6 7">
    <location>
        <begin position="142"/>
        <end position="225"/>
    </location>
</feature>
<feature type="mutagenesis site" description="Abolishes signaling via G-proteins; when associated with A-310 and A-358." evidence="8">
    <original>E</original>
    <variation>A</variation>
    <location>
        <position position="166"/>
    </location>
</feature>
<feature type="mutagenesis site" description="Abolishes signaling via G-proteins; when associated with A-166 and A-358." evidence="8">
    <original>L</original>
    <variation>A</variation>
    <location>
        <position position="310"/>
    </location>
</feature>
<feature type="mutagenesis site" description="Abolishes signaling via G-proteins; when associated with A-166 and A-310." evidence="8">
    <original>F</original>
    <variation>A</variation>
    <location>
        <position position="358"/>
    </location>
</feature>
<feature type="helix" evidence="12">
    <location>
        <begin position="53"/>
        <end position="55"/>
    </location>
</feature>
<feature type="turn" evidence="12">
    <location>
        <begin position="61"/>
        <end position="63"/>
    </location>
</feature>
<feature type="helix" evidence="12">
    <location>
        <begin position="64"/>
        <end position="89"/>
    </location>
</feature>
<feature type="helix" evidence="12">
    <location>
        <begin position="102"/>
        <end position="127"/>
    </location>
</feature>
<feature type="turn" evidence="12">
    <location>
        <begin position="128"/>
        <end position="130"/>
    </location>
</feature>
<feature type="helix" evidence="12">
    <location>
        <begin position="138"/>
        <end position="172"/>
    </location>
</feature>
<feature type="helix" evidence="12">
    <location>
        <begin position="174"/>
        <end position="180"/>
    </location>
</feature>
<feature type="helix" evidence="12">
    <location>
        <begin position="183"/>
        <end position="200"/>
    </location>
</feature>
<feature type="helix" evidence="12">
    <location>
        <begin position="202"/>
        <end position="205"/>
    </location>
</feature>
<feature type="strand" evidence="12">
    <location>
        <begin position="208"/>
        <end position="212"/>
    </location>
</feature>
<feature type="strand" evidence="11">
    <location>
        <begin position="215"/>
        <end position="217"/>
    </location>
</feature>
<feature type="helix" evidence="12">
    <location>
        <begin position="220"/>
        <end position="222"/>
    </location>
</feature>
<feature type="strand" evidence="12">
    <location>
        <begin position="223"/>
        <end position="227"/>
    </location>
</feature>
<feature type="helix" evidence="12">
    <location>
        <begin position="231"/>
        <end position="245"/>
    </location>
</feature>
<feature type="helix" evidence="12">
    <location>
        <begin position="247"/>
        <end position="265"/>
    </location>
</feature>
<feature type="helix" evidence="11">
    <location>
        <begin position="298"/>
        <end position="300"/>
    </location>
</feature>
<feature type="helix" evidence="12">
    <location>
        <begin position="304"/>
        <end position="333"/>
    </location>
</feature>
<feature type="turn" evidence="12">
    <location>
        <begin position="336"/>
        <end position="338"/>
    </location>
</feature>
<feature type="helix" evidence="12">
    <location>
        <begin position="341"/>
        <end position="369"/>
    </location>
</feature>
<feature type="strand" evidence="11">
    <location>
        <begin position="371"/>
        <end position="373"/>
    </location>
</feature>
<feature type="helix" evidence="11">
    <location>
        <begin position="376"/>
        <end position="381"/>
    </location>
</feature>
<keyword id="KW-0002">3D-structure</keyword>
<keyword id="KW-1003">Cell membrane</keyword>
<keyword id="KW-1015">Disulfide bond</keyword>
<keyword id="KW-0297">G-protein coupled receptor</keyword>
<keyword id="KW-0325">Glycoprotein</keyword>
<keyword id="KW-0449">Lipoprotein</keyword>
<keyword id="KW-0472">Membrane</keyword>
<keyword id="KW-0564">Palmitate</keyword>
<keyword id="KW-0675">Receptor</keyword>
<keyword id="KW-1185">Reference proteome</keyword>
<keyword id="KW-0807">Transducer</keyword>
<keyword id="KW-0812">Transmembrane</keyword>
<keyword id="KW-1133">Transmembrane helix</keyword>
<organism>
    <name type="scientific">Rattus norvegicus</name>
    <name type="common">Rat</name>
    <dbReference type="NCBI Taxonomy" id="10116"/>
    <lineage>
        <taxon>Eukaryota</taxon>
        <taxon>Metazoa</taxon>
        <taxon>Chordata</taxon>
        <taxon>Craniata</taxon>
        <taxon>Vertebrata</taxon>
        <taxon>Euteleostomi</taxon>
        <taxon>Mammalia</taxon>
        <taxon>Eutheria</taxon>
        <taxon>Euarchontoglires</taxon>
        <taxon>Glires</taxon>
        <taxon>Rodentia</taxon>
        <taxon>Myomorpha</taxon>
        <taxon>Muroidea</taxon>
        <taxon>Muridae</taxon>
        <taxon>Murinae</taxon>
        <taxon>Rattus</taxon>
    </lineage>
</organism>
<sequence length="424" mass="47055">MHLNSSVPQGTPGEPDAQPFSGPQSEMEATFLALSLSNGSGNTSESDTAGPNSDLDVNTDIYSKVLVTAIYLALFVVGTVGNSVTAFTLARKKSLQSLQSTVHYHLGSLALSDLLILLLAMPVELYNFIWVHHPWAFGDAGCRGYYFLRDACTYATALNVASLSVERYLAICHPFKAKTLMSRSRTKKFISAIWLASALLAIPMLFTMGLQNRSGDGTHPGGLVCTPIVDTATVKVVIQVNTFMSFLFPMLVISILNTVIANKLTVMVHQAAEQGRVCTVGTHNGLEHSTFNMTIEPGRVQALRHGVLVLRAVVIAFVVCWLPYHVRRLMFCYISDEQWTTFLFDFYHYFYMLTNALFYVSSAINPILYNLVSANFRQVFLSTLACLCPGWRHRRKKRPTFSRKPNSMSSNHAFSTSATRETLY</sequence>
<protein>
    <recommendedName>
        <fullName>Neurotensin receptor type 1</fullName>
        <shortName>NT-R-1</shortName>
        <shortName>NTR1</shortName>
    </recommendedName>
    <alternativeName>
        <fullName>High-affinity levocabastine-insensitive neurotensin receptor</fullName>
    </alternativeName>
    <alternativeName>
        <fullName>NTRH</fullName>
    </alternativeName>
</protein>
<comment type="function">
    <text evidence="1 5 6 7 8">G-protein coupled receptor for the tridecapeptide neurotensin (NTS) (PubMed:23051748, PubMed:24453215, PubMed:26205105). Signaling is effected via G proteins that activate a phosphatidylinositol-calcium second messenger system. Signaling leads to the activation of downstream MAP kinases and protects cells against apoptosis (By similarity).</text>
</comment>
<comment type="subunit">
    <text evidence="1">Interacts (palmitoylated form) with GNA11.</text>
</comment>
<comment type="subcellular location">
    <subcellularLocation>
        <location evidence="5 7 8">Cell membrane</location>
        <topology evidence="5 7 8">Multi-pass membrane protein</topology>
    </subcellularLocation>
    <subcellularLocation>
        <location evidence="1">Membrane raft</location>
    </subcellularLocation>
    <text evidence="1">Palmitoylation is required for localization at CAV1-enriched membrane rafts.</text>
</comment>
<comment type="tissue specificity">
    <text evidence="5">Detected in brain and small intestine.</text>
</comment>
<comment type="domain">
    <text evidence="6 8">The ligand binding pocket consists mainly of extracellular loops ECL2 and ECL3, as well as transmembrane regions TM6 and TM7.</text>
</comment>
<comment type="PTM">
    <text evidence="1">N-glycosylated.</text>
</comment>
<comment type="PTM">
    <text evidence="1">Palmitoylated; this is required for normal localization at membrane rafts and normal GNA11-mediated activation of down-stream signaling cascades. The palmitoylation level increases in response to neurotensin treatment.</text>
</comment>
<comment type="similarity">
    <text evidence="3">Belongs to the G-protein coupled receptor 1 family. Neurotensin receptor subfamily. NTSR1 sub-subfamily.</text>
</comment>
<dbReference type="PIR" id="JH0164">
    <property type="entry name" value="JH0164"/>
</dbReference>
<dbReference type="RefSeq" id="NP_001102437.1">
    <property type="nucleotide sequence ID" value="NM_001108967.2"/>
</dbReference>
<dbReference type="RefSeq" id="XP_006235850.1">
    <property type="nucleotide sequence ID" value="XM_006235788.1"/>
</dbReference>
<dbReference type="PDB" id="3ZEV">
    <property type="method" value="X-ray"/>
    <property type="resolution" value="3.00 A"/>
    <property type="chains" value="A/B=50-390"/>
</dbReference>
<dbReference type="PDB" id="4BUO">
    <property type="method" value="X-ray"/>
    <property type="resolution" value="2.75 A"/>
    <property type="chains" value="A/B=50-390"/>
</dbReference>
<dbReference type="PDB" id="4BV0">
    <property type="method" value="X-ray"/>
    <property type="resolution" value="3.10 A"/>
    <property type="chains" value="A/B=50-390"/>
</dbReference>
<dbReference type="PDB" id="4BWB">
    <property type="method" value="X-ray"/>
    <property type="resolution" value="3.57 A"/>
    <property type="chains" value="A/B=50-390"/>
</dbReference>
<dbReference type="PDB" id="4GRV">
    <property type="method" value="X-ray"/>
    <property type="resolution" value="2.80 A"/>
    <property type="chains" value="A=43-268, A=300-396"/>
</dbReference>
<dbReference type="PDB" id="4XEE">
    <property type="method" value="X-ray"/>
    <property type="resolution" value="2.90 A"/>
    <property type="chains" value="A=43-396"/>
</dbReference>
<dbReference type="PDB" id="4XES">
    <property type="method" value="X-ray"/>
    <property type="resolution" value="2.60 A"/>
    <property type="chains" value="A=43-396"/>
</dbReference>
<dbReference type="PDB" id="5T04">
    <property type="method" value="X-ray"/>
    <property type="resolution" value="3.30 A"/>
    <property type="chains" value="A=43-268, A=297-396"/>
</dbReference>
<dbReference type="PDB" id="6YVR">
    <property type="method" value="X-ray"/>
    <property type="resolution" value="2.46 A"/>
    <property type="chains" value="AAA/BBB=50-371"/>
</dbReference>
<dbReference type="PDB" id="6Z4Q">
    <property type="method" value="X-ray"/>
    <property type="resolution" value="2.92 A"/>
    <property type="chains" value="AAA=50-371"/>
</dbReference>
<dbReference type="PDB" id="6Z4S">
    <property type="method" value="X-ray"/>
    <property type="resolution" value="2.71 A"/>
    <property type="chains" value="AAA=50-371"/>
</dbReference>
<dbReference type="PDB" id="6Z4V">
    <property type="method" value="X-ray"/>
    <property type="resolution" value="2.60 A"/>
    <property type="chains" value="AAA=50-371"/>
</dbReference>
<dbReference type="PDB" id="6Z66">
    <property type="method" value="X-ray"/>
    <property type="resolution" value="3.19 A"/>
    <property type="chains" value="AAA=50-371"/>
</dbReference>
<dbReference type="PDB" id="6Z8N">
    <property type="method" value="X-ray"/>
    <property type="resolution" value="2.80 A"/>
    <property type="chains" value="AAA=50-371"/>
</dbReference>
<dbReference type="PDB" id="6ZA8">
    <property type="method" value="X-ray"/>
    <property type="resolution" value="2.72 A"/>
    <property type="chains" value="AAA=50-371"/>
</dbReference>
<dbReference type="PDB" id="6ZIN">
    <property type="method" value="X-ray"/>
    <property type="resolution" value="2.64 A"/>
    <property type="chains" value="AAA=50-371"/>
</dbReference>
<dbReference type="PDB" id="7L0P">
    <property type="method" value="EM"/>
    <property type="resolution" value="4.10 A"/>
    <property type="chains" value="C=50-390"/>
</dbReference>
<dbReference type="PDB" id="7L0Q">
    <property type="method" value="EM"/>
    <property type="resolution" value="4.30 A"/>
    <property type="chains" value="C=50-390"/>
</dbReference>
<dbReference type="PDB" id="7L0R">
    <property type="method" value="EM"/>
    <property type="resolution" value="4.20 A"/>
    <property type="chains" value="C=50-390"/>
</dbReference>
<dbReference type="PDB" id="7L0S">
    <property type="method" value="EM"/>
    <property type="resolution" value="4.50 A"/>
    <property type="chains" value="C=50-390"/>
</dbReference>
<dbReference type="PDB" id="8FMZ">
    <property type="method" value="EM"/>
    <property type="resolution" value="2.59 A"/>
    <property type="chains" value="A=43-420"/>
</dbReference>
<dbReference type="PDB" id="8FN0">
    <property type="method" value="EM"/>
    <property type="resolution" value="2.89 A"/>
    <property type="chains" value="A=43-424"/>
</dbReference>
<dbReference type="PDB" id="8FN1">
    <property type="method" value="EM"/>
    <property type="resolution" value="2.88 A"/>
    <property type="chains" value="A=39-424"/>
</dbReference>
<dbReference type="PDBsum" id="3ZEV"/>
<dbReference type="PDBsum" id="4BUO"/>
<dbReference type="PDBsum" id="4BV0"/>
<dbReference type="PDBsum" id="4BWB"/>
<dbReference type="PDBsum" id="4GRV"/>
<dbReference type="PDBsum" id="4XEE"/>
<dbReference type="PDBsum" id="4XES"/>
<dbReference type="PDBsum" id="5T04"/>
<dbReference type="PDBsum" id="6YVR"/>
<dbReference type="PDBsum" id="6Z4Q"/>
<dbReference type="PDBsum" id="6Z4S"/>
<dbReference type="PDBsum" id="6Z4V"/>
<dbReference type="PDBsum" id="6Z66"/>
<dbReference type="PDBsum" id="6Z8N"/>
<dbReference type="PDBsum" id="6ZA8"/>
<dbReference type="PDBsum" id="6ZIN"/>
<dbReference type="PDBsum" id="7L0P"/>
<dbReference type="PDBsum" id="7L0Q"/>
<dbReference type="PDBsum" id="7L0R"/>
<dbReference type="PDBsum" id="7L0S"/>
<dbReference type="PDBsum" id="8FMZ"/>
<dbReference type="PDBsum" id="8FN0"/>
<dbReference type="PDBsum" id="8FN1"/>
<dbReference type="EMDB" id="EMD-23099"/>
<dbReference type="EMDB" id="EMD-23100"/>
<dbReference type="EMDB" id="EMD-23101"/>
<dbReference type="EMDB" id="EMD-23102"/>
<dbReference type="EMDB" id="EMD-29301"/>
<dbReference type="EMDB" id="EMD-29302"/>
<dbReference type="EMDB" id="EMD-29303"/>
<dbReference type="SMR" id="P20789"/>
<dbReference type="CORUM" id="P20789"/>
<dbReference type="DIP" id="DIP-59956N"/>
<dbReference type="FunCoup" id="P20789">
    <property type="interactions" value="121"/>
</dbReference>
<dbReference type="IntAct" id="P20789">
    <property type="interactions" value="2"/>
</dbReference>
<dbReference type="STRING" id="10116.ENSRNOP00000035997"/>
<dbReference type="BindingDB" id="P20789"/>
<dbReference type="ChEMBL" id="CHEMBL3027"/>
<dbReference type="GuidetoPHARMACOLOGY" id="309"/>
<dbReference type="GlyCosmos" id="P20789">
    <property type="glycosylation" value="3 sites, No reported glycans"/>
</dbReference>
<dbReference type="GlyGen" id="P20789">
    <property type="glycosylation" value="4 sites"/>
</dbReference>
<dbReference type="iPTMnet" id="P20789"/>
<dbReference type="PhosphoSitePlus" id="P20789"/>
<dbReference type="SwissPalm" id="P20789"/>
<dbReference type="PaxDb" id="10116-ENSRNOP00000035997"/>
<dbReference type="Ensembl" id="ENSRNOT00000039780.4">
    <property type="protein sequence ID" value="ENSRNOP00000035997.2"/>
    <property type="gene ID" value="ENSRNOG00000028708.4"/>
</dbReference>
<dbReference type="GeneID" id="366274"/>
<dbReference type="KEGG" id="rno:366274"/>
<dbReference type="UCSC" id="RGD:1306076">
    <property type="organism name" value="rat"/>
</dbReference>
<dbReference type="AGR" id="RGD:1306076"/>
<dbReference type="CTD" id="4923"/>
<dbReference type="RGD" id="1306076">
    <property type="gene designation" value="Ntsr1"/>
</dbReference>
<dbReference type="eggNOG" id="KOG3656">
    <property type="taxonomic scope" value="Eukaryota"/>
</dbReference>
<dbReference type="GeneTree" id="ENSGT01120000271823"/>
<dbReference type="HOGENOM" id="CLU_009579_6_5_1"/>
<dbReference type="InParanoid" id="P20789"/>
<dbReference type="OMA" id="CLCPLWG"/>
<dbReference type="OrthoDB" id="9835116at2759"/>
<dbReference type="PhylomeDB" id="P20789"/>
<dbReference type="TreeFam" id="TF337167"/>
<dbReference type="Reactome" id="R-RNO-375276">
    <property type="pathway name" value="Peptide ligand-binding receptors"/>
</dbReference>
<dbReference type="Reactome" id="R-RNO-416476">
    <property type="pathway name" value="G alpha (q) signalling events"/>
</dbReference>
<dbReference type="EvolutionaryTrace" id="P20789"/>
<dbReference type="PRO" id="PR:P20789"/>
<dbReference type="Proteomes" id="UP000002494">
    <property type="component" value="Chromosome 3"/>
</dbReference>
<dbReference type="Bgee" id="ENSRNOG00000028708">
    <property type="expression patterns" value="Expressed in ovary and 13 other cell types or tissues"/>
</dbReference>
<dbReference type="GO" id="GO:0030424">
    <property type="term" value="C:axon"/>
    <property type="evidence" value="ECO:0000314"/>
    <property type="project" value="RGD"/>
</dbReference>
<dbReference type="GO" id="GO:0043679">
    <property type="term" value="C:axon terminus"/>
    <property type="evidence" value="ECO:0000314"/>
    <property type="project" value="RGD"/>
</dbReference>
<dbReference type="GO" id="GO:0009986">
    <property type="term" value="C:cell surface"/>
    <property type="evidence" value="ECO:0000314"/>
    <property type="project" value="RGD"/>
</dbReference>
<dbReference type="GO" id="GO:0009898">
    <property type="term" value="C:cytoplasmic side of plasma membrane"/>
    <property type="evidence" value="ECO:0000314"/>
    <property type="project" value="RGD"/>
</dbReference>
<dbReference type="GO" id="GO:0030425">
    <property type="term" value="C:dendrite"/>
    <property type="evidence" value="ECO:0000314"/>
    <property type="project" value="RGD"/>
</dbReference>
<dbReference type="GO" id="GO:0043198">
    <property type="term" value="C:dendritic shaft"/>
    <property type="evidence" value="ECO:0000314"/>
    <property type="project" value="RGD"/>
</dbReference>
<dbReference type="GO" id="GO:0043197">
    <property type="term" value="C:dendritic spine"/>
    <property type="evidence" value="ECO:0000314"/>
    <property type="project" value="RGD"/>
</dbReference>
<dbReference type="GO" id="GO:0045121">
    <property type="term" value="C:membrane raft"/>
    <property type="evidence" value="ECO:0000250"/>
    <property type="project" value="UniProtKB"/>
</dbReference>
<dbReference type="GO" id="GO:0044309">
    <property type="term" value="C:neuron spine"/>
    <property type="evidence" value="ECO:0000314"/>
    <property type="project" value="RGD"/>
</dbReference>
<dbReference type="GO" id="GO:0043025">
    <property type="term" value="C:neuronal cell body"/>
    <property type="evidence" value="ECO:0000314"/>
    <property type="project" value="RGD"/>
</dbReference>
<dbReference type="GO" id="GO:0043204">
    <property type="term" value="C:perikaryon"/>
    <property type="evidence" value="ECO:0000314"/>
    <property type="project" value="RGD"/>
</dbReference>
<dbReference type="GO" id="GO:0005886">
    <property type="term" value="C:plasma membrane"/>
    <property type="evidence" value="ECO:0000250"/>
    <property type="project" value="UniProtKB"/>
</dbReference>
<dbReference type="GO" id="GO:0032280">
    <property type="term" value="C:symmetric synapse"/>
    <property type="evidence" value="ECO:0000314"/>
    <property type="project" value="RGD"/>
</dbReference>
<dbReference type="GO" id="GO:0043195">
    <property type="term" value="C:terminal bouton"/>
    <property type="evidence" value="ECO:0000314"/>
    <property type="project" value="RGD"/>
</dbReference>
<dbReference type="GO" id="GO:0016492">
    <property type="term" value="F:G protein-coupled neurotensin receptor activity"/>
    <property type="evidence" value="ECO:0000250"/>
    <property type="project" value="UniProtKB"/>
</dbReference>
<dbReference type="GO" id="GO:0042802">
    <property type="term" value="F:identical protein binding"/>
    <property type="evidence" value="ECO:0000353"/>
    <property type="project" value="RGD"/>
</dbReference>
<dbReference type="GO" id="GO:0044877">
    <property type="term" value="F:protein-containing complex binding"/>
    <property type="evidence" value="ECO:0000353"/>
    <property type="project" value="RGD"/>
</dbReference>
<dbReference type="GO" id="GO:0008344">
    <property type="term" value="P:adult locomotory behavior"/>
    <property type="evidence" value="ECO:0000266"/>
    <property type="project" value="RGD"/>
</dbReference>
<dbReference type="GO" id="GO:0008306">
    <property type="term" value="P:associative learning"/>
    <property type="evidence" value="ECO:0000315"/>
    <property type="project" value="RGD"/>
</dbReference>
<dbReference type="GO" id="GO:0006171">
    <property type="term" value="P:cAMP biosynthetic process"/>
    <property type="evidence" value="ECO:0000315"/>
    <property type="project" value="RGD"/>
</dbReference>
<dbReference type="GO" id="GO:1990708">
    <property type="term" value="P:conditioned place preference"/>
    <property type="evidence" value="ECO:0000315"/>
    <property type="project" value="RGD"/>
</dbReference>
<dbReference type="GO" id="GO:0070779">
    <property type="term" value="P:D-aspartate import across plasma membrane"/>
    <property type="evidence" value="ECO:0000314"/>
    <property type="project" value="RGD"/>
</dbReference>
<dbReference type="GO" id="GO:0050965">
    <property type="term" value="P:detection of temperature stimulus involved in sensory perception of pain"/>
    <property type="evidence" value="ECO:0000315"/>
    <property type="project" value="RGD"/>
</dbReference>
<dbReference type="GO" id="GO:0071545">
    <property type="term" value="P:inositol phosphate catabolic process"/>
    <property type="evidence" value="ECO:0000315"/>
    <property type="project" value="RGD"/>
</dbReference>
<dbReference type="GO" id="GO:0098712">
    <property type="term" value="P:L-glutamate import across plasma membrane"/>
    <property type="evidence" value="ECO:0000314"/>
    <property type="project" value="RGD"/>
</dbReference>
<dbReference type="GO" id="GO:0007612">
    <property type="term" value="P:learning"/>
    <property type="evidence" value="ECO:0000315"/>
    <property type="project" value="RGD"/>
</dbReference>
<dbReference type="GO" id="GO:0043066">
    <property type="term" value="P:negative regulation of apoptotic process"/>
    <property type="evidence" value="ECO:0000250"/>
    <property type="project" value="UniProtKB"/>
</dbReference>
<dbReference type="GO" id="GO:0051280">
    <property type="term" value="P:negative regulation of release of sequestered calcium ion into cytosol"/>
    <property type="evidence" value="ECO:0000315"/>
    <property type="project" value="RGD"/>
</dbReference>
<dbReference type="GO" id="GO:0003085">
    <property type="term" value="P:negative regulation of systemic arterial blood pressure"/>
    <property type="evidence" value="ECO:0000315"/>
    <property type="project" value="RGD"/>
</dbReference>
<dbReference type="GO" id="GO:0007218">
    <property type="term" value="P:neuropeptide signaling pathway"/>
    <property type="evidence" value="ECO:0000266"/>
    <property type="project" value="RGD"/>
</dbReference>
<dbReference type="GO" id="GO:0043065">
    <property type="term" value="P:positive regulation of apoptotic process"/>
    <property type="evidence" value="ECO:0000315"/>
    <property type="project" value="RGD"/>
</dbReference>
<dbReference type="GO" id="GO:0090238">
    <property type="term" value="P:positive regulation of arachidonate secretion"/>
    <property type="evidence" value="ECO:0000315"/>
    <property type="project" value="RGD"/>
</dbReference>
<dbReference type="GO" id="GO:0014054">
    <property type="term" value="P:positive regulation of gamma-aminobutyric acid secretion"/>
    <property type="evidence" value="ECO:0000315"/>
    <property type="project" value="RGD"/>
</dbReference>
<dbReference type="GO" id="GO:0010628">
    <property type="term" value="P:positive regulation of gene expression"/>
    <property type="evidence" value="ECO:0000266"/>
    <property type="project" value="RGD"/>
</dbReference>
<dbReference type="GO" id="GO:0014049">
    <property type="term" value="P:positive regulation of glutamate secretion"/>
    <property type="evidence" value="ECO:0000315"/>
    <property type="project" value="RGD"/>
</dbReference>
<dbReference type="GO" id="GO:0097151">
    <property type="term" value="P:positive regulation of inhibitory postsynaptic potential"/>
    <property type="evidence" value="ECO:0000315"/>
    <property type="project" value="RGD"/>
</dbReference>
<dbReference type="GO" id="GO:0060732">
    <property type="term" value="P:positive regulation of inositol phosphate biosynthetic process"/>
    <property type="evidence" value="ECO:0000315"/>
    <property type="project" value="RGD"/>
</dbReference>
<dbReference type="GO" id="GO:0040017">
    <property type="term" value="P:positive regulation of locomotion"/>
    <property type="evidence" value="ECO:0000315"/>
    <property type="project" value="RGD"/>
</dbReference>
<dbReference type="GO" id="GO:0051281">
    <property type="term" value="P:positive regulation of release of sequestered calcium ion into cytosol"/>
    <property type="evidence" value="ECO:0000315"/>
    <property type="project" value="RGD"/>
</dbReference>
<dbReference type="GO" id="GO:2000822">
    <property type="term" value="P:regulation of behavioral fear response"/>
    <property type="evidence" value="ECO:0000315"/>
    <property type="project" value="RGD"/>
</dbReference>
<dbReference type="GO" id="GO:0032960">
    <property type="term" value="P:regulation of inositol trisphosphate biosynthetic process"/>
    <property type="evidence" value="ECO:0000314"/>
    <property type="project" value="RGD"/>
</dbReference>
<dbReference type="GO" id="GO:0003254">
    <property type="term" value="P:regulation of membrane depolarization"/>
    <property type="evidence" value="ECO:0000315"/>
    <property type="project" value="RGD"/>
</dbReference>
<dbReference type="GO" id="GO:0043576">
    <property type="term" value="P:regulation of respiratory gaseous exchange"/>
    <property type="evidence" value="ECO:0000315"/>
    <property type="project" value="RGD"/>
</dbReference>
<dbReference type="GO" id="GO:0032094">
    <property type="term" value="P:response to food"/>
    <property type="evidence" value="ECO:0000270"/>
    <property type="project" value="RGD"/>
</dbReference>
<dbReference type="GO" id="GO:0033993">
    <property type="term" value="P:response to lipid"/>
    <property type="evidence" value="ECO:0000314"/>
    <property type="project" value="RGD"/>
</dbReference>
<dbReference type="GO" id="GO:0006950">
    <property type="term" value="P:response to stress"/>
    <property type="evidence" value="ECO:0000270"/>
    <property type="project" value="RGD"/>
</dbReference>
<dbReference type="GO" id="GO:0001659">
    <property type="term" value="P:temperature homeostasis"/>
    <property type="evidence" value="ECO:0000315"/>
    <property type="project" value="RGD"/>
</dbReference>
<dbReference type="GO" id="GO:0071625">
    <property type="term" value="P:vocalization behavior"/>
    <property type="evidence" value="ECO:0000314"/>
    <property type="project" value="RGD"/>
</dbReference>
<dbReference type="CDD" id="cd15355">
    <property type="entry name" value="7tmA_NTSR1"/>
    <property type="match status" value="1"/>
</dbReference>
<dbReference type="FunFam" id="1.20.1070.10:FF:000217">
    <property type="entry name" value="neurotensin receptor type 1"/>
    <property type="match status" value="1"/>
</dbReference>
<dbReference type="Gene3D" id="1.20.1070.10">
    <property type="entry name" value="Rhodopsin 7-helix transmembrane proteins"/>
    <property type="match status" value="1"/>
</dbReference>
<dbReference type="InterPro" id="IPR000276">
    <property type="entry name" value="GPCR_Rhodpsn"/>
</dbReference>
<dbReference type="InterPro" id="IPR017452">
    <property type="entry name" value="GPCR_Rhodpsn_7TM"/>
</dbReference>
<dbReference type="InterPro" id="IPR003985">
    <property type="entry name" value="NT1_rcpt"/>
</dbReference>
<dbReference type="InterPro" id="IPR003984">
    <property type="entry name" value="NT_rcpt"/>
</dbReference>
<dbReference type="PANTHER" id="PTHR24243">
    <property type="entry name" value="G-PROTEIN COUPLED RECEPTOR"/>
    <property type="match status" value="1"/>
</dbReference>
<dbReference type="PANTHER" id="PTHR24243:SF9">
    <property type="entry name" value="NEUROTENSIN RECEPTOR TYPE 1"/>
    <property type="match status" value="1"/>
</dbReference>
<dbReference type="Pfam" id="PF00001">
    <property type="entry name" value="7tm_1"/>
    <property type="match status" value="1"/>
</dbReference>
<dbReference type="PRINTS" id="PR00237">
    <property type="entry name" value="GPCRRHODOPSN"/>
</dbReference>
<dbReference type="PRINTS" id="PR01479">
    <property type="entry name" value="NEUROTENSINR"/>
</dbReference>
<dbReference type="PRINTS" id="PR01480">
    <property type="entry name" value="NEUROTENSN1R"/>
</dbReference>
<dbReference type="SUPFAM" id="SSF81321">
    <property type="entry name" value="Family A G protein-coupled receptor-like"/>
    <property type="match status" value="1"/>
</dbReference>
<dbReference type="PROSITE" id="PS00237">
    <property type="entry name" value="G_PROTEIN_RECEP_F1_1"/>
    <property type="match status" value="1"/>
</dbReference>
<dbReference type="PROSITE" id="PS50262">
    <property type="entry name" value="G_PROTEIN_RECEP_F1_2"/>
    <property type="match status" value="1"/>
</dbReference>
<accession>P20789</accession>